<organism>
    <name type="scientific">Escherichia coli (strain K12)</name>
    <dbReference type="NCBI Taxonomy" id="83333"/>
    <lineage>
        <taxon>Bacteria</taxon>
        <taxon>Pseudomonadati</taxon>
        <taxon>Pseudomonadota</taxon>
        <taxon>Gammaproteobacteria</taxon>
        <taxon>Enterobacterales</taxon>
        <taxon>Enterobacteriaceae</taxon>
        <taxon>Escherichia</taxon>
    </lineage>
</organism>
<reference key="1">
    <citation type="journal article" date="1992" name="J. Bacteriol.">
        <title>Identification, cloning, and characterization of rcsF, a new regulator gene for exopolysaccharide synthesis that suppresses the division mutation ftsZ84 in Escherichia coli K-12.</title>
        <authorList>
            <person name="Gervais F.G."/>
            <person name="Drapeau G.R."/>
        </authorList>
    </citation>
    <scope>NUCLEOTIDE SEQUENCE [GENOMIC DNA]</scope>
    <source>
        <strain>K12</strain>
    </source>
</reference>
<reference key="2">
    <citation type="submission" date="1993-04" db="EMBL/GenBank/DDBJ databases">
        <authorList>
            <person name="Miyamoto K."/>
        </authorList>
    </citation>
    <scope>NUCLEOTIDE SEQUENCE [GENOMIC DNA]</scope>
    <source>
        <strain>K12</strain>
    </source>
</reference>
<reference key="3">
    <citation type="submission" date="1996-02" db="EMBL/GenBank/DDBJ databases">
        <title>Systematic sequencing of the Escherichia coli genome: analysis of the 4.0 - 6.0 min (189,987 - 281,416bp) region.</title>
        <authorList>
            <person name="Takemoto K."/>
            <person name="Mori H."/>
            <person name="Murayama N."/>
            <person name="Kataoka K."/>
            <person name="Yano M."/>
            <person name="Itoh T."/>
            <person name="Yamamoto Y."/>
            <person name="Inokuchi H."/>
            <person name="Miki T."/>
            <person name="Hatada E."/>
            <person name="Fukuda R."/>
            <person name="Ichihara S."/>
            <person name="Mizuno T."/>
            <person name="Makino K."/>
            <person name="Nakata A."/>
            <person name="Yura T."/>
            <person name="Sampei G."/>
            <person name="Mizobuchi K."/>
        </authorList>
    </citation>
    <scope>NUCLEOTIDE SEQUENCE [LARGE SCALE GENOMIC DNA]</scope>
    <source>
        <strain>K12 / W3110 / ATCC 27325 / DSM 5911</strain>
    </source>
</reference>
<reference key="4">
    <citation type="submission" date="1997-01" db="EMBL/GenBank/DDBJ databases">
        <title>Sequence of minutes 4-25 of Escherichia coli.</title>
        <authorList>
            <person name="Chung E."/>
            <person name="Allen E."/>
            <person name="Araujo R."/>
            <person name="Aparicio A.M."/>
            <person name="Davis K."/>
            <person name="Duncan M."/>
            <person name="Federspiel N."/>
            <person name="Hyman R."/>
            <person name="Kalman S."/>
            <person name="Komp C."/>
            <person name="Kurdi O."/>
            <person name="Lew H."/>
            <person name="Lin D."/>
            <person name="Namath A."/>
            <person name="Oefner P."/>
            <person name="Roberts D."/>
            <person name="Schramm S."/>
            <person name="Davis R.W."/>
        </authorList>
    </citation>
    <scope>NUCLEOTIDE SEQUENCE [LARGE SCALE GENOMIC DNA]</scope>
    <source>
        <strain>K12 / MG1655 / ATCC 47076</strain>
    </source>
</reference>
<reference key="5">
    <citation type="journal article" date="1997" name="Science">
        <title>The complete genome sequence of Escherichia coli K-12.</title>
        <authorList>
            <person name="Blattner F.R."/>
            <person name="Plunkett G. III"/>
            <person name="Bloch C.A."/>
            <person name="Perna N.T."/>
            <person name="Burland V."/>
            <person name="Riley M."/>
            <person name="Collado-Vides J."/>
            <person name="Glasner J.D."/>
            <person name="Rode C.K."/>
            <person name="Mayhew G.F."/>
            <person name="Gregor J."/>
            <person name="Davis N.W."/>
            <person name="Kirkpatrick H.A."/>
            <person name="Goeden M.A."/>
            <person name="Rose D.J."/>
            <person name="Mau B."/>
            <person name="Shao Y."/>
        </authorList>
    </citation>
    <scope>NUCLEOTIDE SEQUENCE [LARGE SCALE GENOMIC DNA]</scope>
    <source>
        <strain>K12 / MG1655 / ATCC 47076</strain>
    </source>
</reference>
<reference key="6">
    <citation type="journal article" date="2006" name="Mol. Syst. Biol.">
        <title>Highly accurate genome sequences of Escherichia coli K-12 strains MG1655 and W3110.</title>
        <authorList>
            <person name="Hayashi K."/>
            <person name="Morooka N."/>
            <person name="Yamamoto Y."/>
            <person name="Fujita K."/>
            <person name="Isono K."/>
            <person name="Choi S."/>
            <person name="Ohtsubo E."/>
            <person name="Baba T."/>
            <person name="Wanner B.L."/>
            <person name="Mori H."/>
            <person name="Horiuchi T."/>
        </authorList>
    </citation>
    <scope>NUCLEOTIDE SEQUENCE [LARGE SCALE GENOMIC DNA]</scope>
    <scope>SEQUENCE REVISION TO 37-38 AND 46</scope>
    <source>
        <strain>K12 / W3110 / ATCC 27325 / DSM 5911</strain>
    </source>
</reference>
<reference key="7">
    <citation type="journal article" date="2003" name="J. Bacteriol.">
        <title>Genome-wide analyses revealing a signaling network of the RcsC-YojN-RcsB phosphorelay system in Escherichia coli.</title>
        <authorList>
            <person name="Hagiwara D."/>
            <person name="Sugiura M."/>
            <person name="Oshima T."/>
            <person name="Mori H."/>
            <person name="Aiba H."/>
            <person name="Yamashino T."/>
            <person name="Mizuno T."/>
        </authorList>
    </citation>
    <scope>FUNCTION</scope>
    <source>
        <strain>K12 / ST001</strain>
    </source>
</reference>
<reference key="8">
    <citation type="journal article" date="2003" name="Mol. Microbiol.">
        <title>The RcsC sensor kinase is required for normal biofilm formation in Escherichia coli K-12 and controls the expression of a regulon in response to growth on a solid surface.</title>
        <authorList>
            <person name="Ferrieres L."/>
            <person name="Clarke D.J."/>
        </authorList>
    </citation>
    <scope>FUNCTION</scope>
    <source>
        <strain>K12</strain>
    </source>
</reference>
<reference key="9">
    <citation type="journal article" date="2005" name="J. Bacteriol.">
        <title>Role of RcsF in signaling to the Rcs phosphorelay pathway in Escherichia coli.</title>
        <authorList>
            <person name="Majdalani N."/>
            <person name="Heck M."/>
            <person name="Stout V."/>
            <person name="Gottesman S."/>
        </authorList>
    </citation>
    <scope>FUNCTION</scope>
    <source>
        <strain>K12 / MG1655 / ATCC 47076</strain>
    </source>
</reference>
<reference key="10">
    <citation type="journal article" date="2006" name="J. Bacteriol.">
        <title>RcsF is an outer membrane lipoprotein involved in the RcsCDB phosphorelay signaling pathway in Escherichia coli.</title>
        <authorList>
            <person name="Castanie-Cornet M.P."/>
            <person name="Cam K."/>
            <person name="Jacq A."/>
        </authorList>
    </citation>
    <scope>FUNCTION</scope>
    <scope>SUBCELLULAR LOCATION</scope>
</reference>
<reference key="11">
    <citation type="journal article" date="2013" name="Microbiology">
        <title>Importance of the proline-rich region for the regulatory function of RcsF, an outer membrane lipoprotein component of the Escherichia coli Rcs signal transduction system.</title>
        <authorList>
            <person name="Umekawa M."/>
            <person name="Miyagawa H."/>
            <person name="Kondo D."/>
            <person name="Matsuoka S."/>
            <person name="Matsumoto K."/>
            <person name="Hara H."/>
        </authorList>
    </citation>
    <scope>SUBCELLULAR LOCATION</scope>
    <scope>DOMAIN</scope>
</reference>
<reference key="12">
    <citation type="journal article" date="2011" name="J. Biol. Chem.">
        <title>Crystal structure of the outer membrane protein RcsF, a new substrate for the periplasmic protein-disulfide isomerase DsbC.</title>
        <authorList>
            <person name="Leverrier P."/>
            <person name="Declercq J.P."/>
            <person name="Denoncin K."/>
            <person name="Vertommen D."/>
            <person name="Hiniker A."/>
            <person name="Cho S.H."/>
            <person name="Collet J.F."/>
        </authorList>
    </citation>
    <scope>X-RAY CRYSTALLOGRAPHY (2.00 ANGSTROMS) OF 17-134</scope>
    <scope>INTERACTION WITH DSBC</scope>
    <scope>DISULFIDE BONDS</scope>
    <scope>MUTAGENESIS OF CYS-74; CYS-109; CYS-118 AND CYS-124</scope>
    <source>
        <strain>K12 / MC4100 / ATCC 35695 / DSM 6574</strain>
    </source>
</reference>
<reference key="13">
    <citation type="journal article" date="2011" name="J. Biol. Chem.">
        <title>A disulfide bridge network within the soluble periplasmic domain determines structure and function of the outer membrane protein RcsF.</title>
        <authorList>
            <person name="Rogov V.V."/>
            <person name="Rogova N.Y."/>
            <person name="Bernhard F."/>
            <person name="Lohr F."/>
            <person name="Dotsch V."/>
        </authorList>
    </citation>
    <scope>STRUCTURE BY NMR OF 31-134</scope>
    <scope>DISULFIDE BONDS</scope>
    <scope>MUTAGENESIS OF CYS-7; CYS-16; CYS-74; ARG-89; LYS-90; CYS-109; CYS-118 AND CYS-124</scope>
</reference>
<sequence>MRALPICLVALMLSGCSMLSRSPVEPVQSTAPQPKAEPAKPKAPRATPVRIYTNAEELVGKPFRDLGEVSGDSCQASNQDSPPSIPTARKRMQINASKMKANAVLLHSCEVTSGTPGCYRQAVCIGSALNITAK</sequence>
<protein>
    <recommendedName>
        <fullName evidence="1">Outer membrane lipoprotein RcsF</fullName>
    </recommendedName>
</protein>
<gene>
    <name evidence="1 10" type="primary">rcsF</name>
    <name type="ordered locus">b0196</name>
    <name type="ordered locus">JW0192</name>
</gene>
<accession>P69411</accession>
<accession>P28633</accession>
<evidence type="ECO:0000255" key="1">
    <source>
        <dbReference type="HAMAP-Rule" id="MF_00976"/>
    </source>
</evidence>
<evidence type="ECO:0000256" key="2">
    <source>
        <dbReference type="SAM" id="MobiDB-lite"/>
    </source>
</evidence>
<evidence type="ECO:0000269" key="3">
    <source>
    </source>
</evidence>
<evidence type="ECO:0000269" key="4">
    <source>
    </source>
</evidence>
<evidence type="ECO:0000269" key="5">
    <source>
    </source>
</evidence>
<evidence type="ECO:0000269" key="6">
    <source>
    </source>
</evidence>
<evidence type="ECO:0000269" key="7">
    <source>
    </source>
</evidence>
<evidence type="ECO:0000269" key="8">
    <source>
    </source>
</evidence>
<evidence type="ECO:0000269" key="9">
    <source>
    </source>
</evidence>
<evidence type="ECO:0000303" key="10">
    <source>
    </source>
</evidence>
<evidence type="ECO:0000305" key="11"/>
<evidence type="ECO:0000305" key="12">
    <source>
    </source>
</evidence>
<evidence type="ECO:0007829" key="13">
    <source>
        <dbReference type="PDB" id="7V8L"/>
    </source>
</evidence>
<evidence type="ECO:0007829" key="14">
    <source>
        <dbReference type="PDB" id="9BIY"/>
    </source>
</evidence>
<name>RCSF_ECOLI</name>
<proteinExistence type="evidence at protein level"/>
<keyword id="KW-0002">3D-structure</keyword>
<keyword id="KW-0972">Capsule biogenesis/degradation</keyword>
<keyword id="KW-0998">Cell outer membrane</keyword>
<keyword id="KW-1015">Disulfide bond</keyword>
<keyword id="KW-0449">Lipoprotein</keyword>
<keyword id="KW-0472">Membrane</keyword>
<keyword id="KW-0564">Palmitate</keyword>
<keyword id="KW-1185">Reference proteome</keyword>
<keyword id="KW-0732">Signal</keyword>
<feature type="signal peptide" evidence="1">
    <location>
        <begin position="1"/>
        <end position="15"/>
    </location>
</feature>
<feature type="chain" id="PRO_0000097208" description="Outer membrane lipoprotein RcsF">
    <location>
        <begin position="16"/>
        <end position="134"/>
    </location>
</feature>
<feature type="region of interest" description="Disordered" evidence="2">
    <location>
        <begin position="22"/>
        <end position="48"/>
    </location>
</feature>
<feature type="region of interest" description="PRR">
    <location>
        <begin position="32"/>
        <end position="50"/>
    </location>
</feature>
<feature type="region of interest" description="Disordered" evidence="2">
    <location>
        <begin position="67"/>
        <end position="88"/>
    </location>
</feature>
<feature type="compositionally biased region" description="Polar residues" evidence="2">
    <location>
        <begin position="72"/>
        <end position="82"/>
    </location>
</feature>
<feature type="lipid moiety-binding region" description="N-palmitoyl cysteine" evidence="1">
    <location>
        <position position="16"/>
    </location>
</feature>
<feature type="lipid moiety-binding region" description="S-diacylglycerol cysteine" evidence="1">
    <location>
        <position position="16"/>
    </location>
</feature>
<feature type="disulfide bond" evidence="1 7 8">
    <location>
        <begin position="74"/>
        <end position="118"/>
    </location>
</feature>
<feature type="disulfide bond" evidence="1 7 8">
    <location>
        <begin position="109"/>
        <end position="124"/>
    </location>
</feature>
<feature type="mutagenesis site" description="Does not affect exopolysaccharide biosynthesis." evidence="8">
    <original>C</original>
    <variation>S</variation>
    <location>
        <position position="7"/>
    </location>
</feature>
<feature type="mutagenesis site" description="Strongly decreases exopolysaccharide biosynthesis." evidence="8">
    <original>C</original>
    <variation>S</variation>
    <location>
        <position position="16"/>
    </location>
</feature>
<feature type="mutagenesis site" description="Mucoid phenotype. Decreases exopolysaccharide biosynthesis." evidence="7 8">
    <original>C</original>
    <variation>S</variation>
    <location>
        <position position="74"/>
    </location>
</feature>
<feature type="mutagenesis site" description="Does not affect exopolysaccharide biosynthesis; when associated with A-90." evidence="8">
    <original>R</original>
    <variation>A</variation>
    <location>
        <position position="89"/>
    </location>
</feature>
<feature type="mutagenesis site" description="Does not affect exopolysaccharide biosynthesis; when associated with A-89." evidence="8">
    <original>K</original>
    <variation>A</variation>
    <location>
        <position position="90"/>
    </location>
</feature>
<feature type="mutagenesis site" description="Does not activate the production of capsule polysaccharides." evidence="7 8">
    <original>C</original>
    <variation>S</variation>
    <location>
        <position position="109"/>
    </location>
</feature>
<feature type="mutagenesis site" description="Mucoid phenotype. Decreases exopolysaccharide biosynthesis." evidence="7 8">
    <original>C</original>
    <variation>S</variation>
    <location>
        <position position="118"/>
    </location>
</feature>
<feature type="mutagenesis site" description="Does not activate the production of capsule polysaccharides." evidence="7 8">
    <original>C</original>
    <variation>S</variation>
    <location>
        <position position="124"/>
    </location>
</feature>
<feature type="sequence conflict" description="In Ref. 1; AAA24508." evidence="11" ref="1">
    <original>EP</original>
    <variation>DA</variation>
    <location>
        <begin position="37"/>
        <end position="38"/>
    </location>
</feature>
<feature type="sequence conflict" description="In Ref. 1; AAA24508." evidence="11" ref="1">
    <location>
        <position position="46"/>
    </location>
</feature>
<feature type="turn" evidence="13">
    <location>
        <begin position="18"/>
        <end position="21"/>
    </location>
</feature>
<feature type="strand" evidence="14">
    <location>
        <begin position="50"/>
        <end position="54"/>
    </location>
</feature>
<feature type="helix" evidence="14">
    <location>
        <begin position="55"/>
        <end position="58"/>
    </location>
</feature>
<feature type="strand" evidence="14">
    <location>
        <begin position="63"/>
        <end position="77"/>
    </location>
</feature>
<feature type="helix" evidence="14">
    <location>
        <begin position="85"/>
        <end position="98"/>
    </location>
</feature>
<feature type="strand" evidence="14">
    <location>
        <begin position="102"/>
        <end position="108"/>
    </location>
</feature>
<feature type="strand" evidence="14">
    <location>
        <begin position="111"/>
        <end position="114"/>
    </location>
</feature>
<feature type="strand" evidence="14">
    <location>
        <begin position="118"/>
        <end position="131"/>
    </location>
</feature>
<comment type="function">
    <text evidence="1 3 4 5 6">Essential component of the Rcs signaling system, which controls transcription of numerous genes. Plays a role in signal transduction from the cell surface to the histidine kinase RcsC. May detect outer membrane defects. The system controls expression of genes involved in colanic acid capsule synthesis, biofilm formation and cell division.</text>
</comment>
<comment type="subunit">
    <text evidence="7">Interacts with DsbC.</text>
</comment>
<comment type="interaction">
    <interactant intactId="EBI-1114706">
        <id>P69411</id>
    </interactant>
    <interactant intactId="EBI-907371">
        <id>P0A940</id>
        <label>bamA</label>
    </interactant>
    <organismsDiffer>false</organismsDiffer>
    <experiments>3</experiments>
</comment>
<comment type="interaction">
    <interactant intactId="EBI-1114706">
        <id>P69411</id>
    </interactant>
    <interactant intactId="EBI-371347">
        <id>P0A910</id>
        <label>ompA</label>
    </interactant>
    <organismsDiffer>false</organismsDiffer>
    <experiments>3</experiments>
</comment>
<comment type="subcellular location">
    <subcellularLocation>
        <location evidence="1 6 9">Cell outer membrane</location>
        <topology evidence="1 6 9">Lipid-anchor</topology>
        <orientation evidence="1 6 9">Periplasmic side</orientation>
    </subcellularLocation>
</comment>
<comment type="domain">
    <text evidence="9">Contains an N-terminal proline-rich region (PRR), which probably plays an important role in the regulation of function of RcsF and activation of the Rcs signaling system.</text>
</comment>
<comment type="miscellaneous">
    <text evidence="12">The formation of the non-consecutive disulfides depends on the periplasmic disulfide isomerase DsbC. The disulfide bond between Cys-109 and Cys-124 is particularly important for the assembly of an active RcsF (PubMed:21454485).</text>
</comment>
<comment type="similarity">
    <text evidence="1">Belongs to the RcsF family.</text>
</comment>
<dbReference type="EMBL" id="L04474">
    <property type="protein sequence ID" value="AAA24508.1"/>
    <property type="molecule type" value="Genomic_DNA"/>
</dbReference>
<dbReference type="EMBL" id="D15061">
    <property type="protein sequence ID" value="BAA03656.1"/>
    <property type="molecule type" value="Genomic_DNA"/>
</dbReference>
<dbReference type="EMBL" id="U70214">
    <property type="protein sequence ID" value="AAB08624.1"/>
    <property type="molecule type" value="Genomic_DNA"/>
</dbReference>
<dbReference type="EMBL" id="U00096">
    <property type="protein sequence ID" value="AAC73307.1"/>
    <property type="molecule type" value="Genomic_DNA"/>
</dbReference>
<dbReference type="EMBL" id="AP009048">
    <property type="protein sequence ID" value="BAA77873.2"/>
    <property type="molecule type" value="Genomic_DNA"/>
</dbReference>
<dbReference type="PIR" id="D64744">
    <property type="entry name" value="D64744"/>
</dbReference>
<dbReference type="RefSeq" id="NP_414738.1">
    <property type="nucleotide sequence ID" value="NC_000913.3"/>
</dbReference>
<dbReference type="RefSeq" id="WP_001202329.1">
    <property type="nucleotide sequence ID" value="NZ_STEB01000032.1"/>
</dbReference>
<dbReference type="PDB" id="2L8Y">
    <property type="method" value="NMR"/>
    <property type="chains" value="A=31-134"/>
</dbReference>
<dbReference type="PDB" id="2Y1B">
    <property type="method" value="X-ray"/>
    <property type="resolution" value="2.00 A"/>
    <property type="chains" value="A=17-134"/>
</dbReference>
<dbReference type="PDB" id="6T1W">
    <property type="method" value="X-ray"/>
    <property type="resolution" value="3.79 A"/>
    <property type="chains" value="C/D=1-134"/>
</dbReference>
<dbReference type="PDB" id="7V8L">
    <property type="method" value="EM"/>
    <property type="resolution" value="3.50 A"/>
    <property type="chains" value="A=17-134"/>
</dbReference>
<dbReference type="PDB" id="9BIY">
    <property type="method" value="X-ray"/>
    <property type="resolution" value="1.80 A"/>
    <property type="chains" value="B=45-132"/>
</dbReference>
<dbReference type="PDBsum" id="2L8Y"/>
<dbReference type="PDBsum" id="2Y1B"/>
<dbReference type="PDBsum" id="6T1W"/>
<dbReference type="PDBsum" id="7V8L"/>
<dbReference type="PDBsum" id="9BIY"/>
<dbReference type="BMRB" id="P69411"/>
<dbReference type="EMDB" id="EMD-31803"/>
<dbReference type="SMR" id="P69411"/>
<dbReference type="BioGRID" id="4259530">
    <property type="interactions" value="17"/>
</dbReference>
<dbReference type="FunCoup" id="P69411">
    <property type="interactions" value="213"/>
</dbReference>
<dbReference type="IntAct" id="P69411">
    <property type="interactions" value="10"/>
</dbReference>
<dbReference type="STRING" id="511145.b0196"/>
<dbReference type="jPOST" id="P69411"/>
<dbReference type="PaxDb" id="511145-b0196"/>
<dbReference type="EnsemblBacteria" id="AAC73307">
    <property type="protein sequence ID" value="AAC73307"/>
    <property type="gene ID" value="b0196"/>
</dbReference>
<dbReference type="GeneID" id="86862707"/>
<dbReference type="GeneID" id="949113"/>
<dbReference type="KEGG" id="ecj:JW0192"/>
<dbReference type="KEGG" id="eco:b0196"/>
<dbReference type="KEGG" id="ecoc:C3026_00910"/>
<dbReference type="PATRIC" id="fig|1411691.4.peg.2082"/>
<dbReference type="EchoBASE" id="EB1465"/>
<dbReference type="eggNOG" id="ENOG5031XBN">
    <property type="taxonomic scope" value="Bacteria"/>
</dbReference>
<dbReference type="HOGENOM" id="CLU_142248_1_0_6"/>
<dbReference type="InParanoid" id="P69411"/>
<dbReference type="OMA" id="FRDMGEV"/>
<dbReference type="OrthoDB" id="6505467at2"/>
<dbReference type="PhylomeDB" id="P69411"/>
<dbReference type="BioCyc" id="EcoCyc:RCSF-MONOMER"/>
<dbReference type="EvolutionaryTrace" id="P69411"/>
<dbReference type="PRO" id="PR:P69411"/>
<dbReference type="Proteomes" id="UP000000625">
    <property type="component" value="Chromosome"/>
</dbReference>
<dbReference type="GO" id="GO:0009279">
    <property type="term" value="C:cell outer membrane"/>
    <property type="evidence" value="ECO:0000314"/>
    <property type="project" value="EcoCyc"/>
</dbReference>
<dbReference type="GO" id="GO:0106234">
    <property type="term" value="C:outer membrane protein complex"/>
    <property type="evidence" value="ECO:0000314"/>
    <property type="project" value="EcoCyc"/>
</dbReference>
<dbReference type="GO" id="GO:0030288">
    <property type="term" value="C:outer membrane-bounded periplasmic space"/>
    <property type="evidence" value="ECO:0000314"/>
    <property type="project" value="EcoCyc"/>
</dbReference>
<dbReference type="GO" id="GO:0031241">
    <property type="term" value="C:periplasmic side of cell outer membrane"/>
    <property type="evidence" value="ECO:0007669"/>
    <property type="project" value="UniProtKB-UniRule"/>
</dbReference>
<dbReference type="GO" id="GO:0036460">
    <property type="term" value="P:cellular response to cell envelope stress"/>
    <property type="evidence" value="ECO:0000314"/>
    <property type="project" value="EcoCyc"/>
</dbReference>
<dbReference type="GO" id="GO:0035556">
    <property type="term" value="P:intracellular signal transduction"/>
    <property type="evidence" value="ECO:0007669"/>
    <property type="project" value="InterPro"/>
</dbReference>
<dbReference type="GO" id="GO:0070299">
    <property type="term" value="P:positive regulation of phosphorelay signal transduction system"/>
    <property type="evidence" value="ECO:0000314"/>
    <property type="project" value="EcoCyc"/>
</dbReference>
<dbReference type="GO" id="GO:0007165">
    <property type="term" value="P:signal transduction"/>
    <property type="evidence" value="ECO:0000269"/>
    <property type="project" value="EcoCyc"/>
</dbReference>
<dbReference type="FunFam" id="3.30.110.70:FF:000001">
    <property type="entry name" value="Outer membrane lipoprotein RcsF"/>
    <property type="match status" value="1"/>
</dbReference>
<dbReference type="Gene3D" id="3.30.110.70">
    <property type="entry name" value="Hypothetical protein apc22750. Chain B"/>
    <property type="match status" value="1"/>
</dbReference>
<dbReference type="HAMAP" id="MF_00976">
    <property type="entry name" value="RcsF"/>
    <property type="match status" value="1"/>
</dbReference>
<dbReference type="InterPro" id="IPR030852">
    <property type="entry name" value="RcsF"/>
</dbReference>
<dbReference type="NCBIfam" id="NF008048">
    <property type="entry name" value="PRK10781.1"/>
    <property type="match status" value="1"/>
</dbReference>
<dbReference type="Pfam" id="PF16358">
    <property type="entry name" value="RcsF"/>
    <property type="match status" value="1"/>
</dbReference>
<dbReference type="PROSITE" id="PS51257">
    <property type="entry name" value="PROKAR_LIPOPROTEIN"/>
    <property type="match status" value="1"/>
</dbReference>